<proteinExistence type="evidence at transcript level"/>
<gene>
    <name evidence="7" type="primary">hlh-17</name>
    <name evidence="7" type="ORF">F38C2.2</name>
</gene>
<protein>
    <recommendedName>
        <fullName evidence="7">Helix-loop-helix protein 17</fullName>
    </recommendedName>
</protein>
<keyword id="KW-0238">DNA-binding</keyword>
<keyword id="KW-0539">Nucleus</keyword>
<keyword id="KW-1185">Reference proteome</keyword>
<keyword id="KW-0804">Transcription</keyword>
<keyword id="KW-0805">Transcription regulation</keyword>
<accession>O45489</accession>
<feature type="chain" id="PRO_0000451454" description="Helix-loop-helix protein 17">
    <location>
        <begin position="1"/>
        <end position="101"/>
    </location>
</feature>
<feature type="domain" description="bHLH" evidence="1">
    <location>
        <begin position="14"/>
        <end position="68"/>
    </location>
</feature>
<feature type="region of interest" description="Basic motif" evidence="1">
    <location>
        <begin position="14"/>
        <end position="27"/>
    </location>
</feature>
<feature type="region of interest" description="Helix-loop-helix motif" evidence="1">
    <location>
        <begin position="28"/>
        <end position="68"/>
    </location>
</feature>
<comment type="function">
    <text evidence="2 3 4">Probable transcription factor that regulates the expression of dopamine receptors dop-1, dop-2 and dop-3 and thus dopamine-dependent behaviors (PubMed:18508862, PubMed:21688290). May act redundantly with hlh-31 and hlh-32 to regulate ventral CEPsh glia functions (PubMed:18508862). May play a role in chemotactic responses in larvae (PubMed:16014321, PubMed:21688290).</text>
</comment>
<comment type="subcellular location">
    <subcellularLocation>
        <location evidence="1">Nucleus</location>
    </subcellularLocation>
</comment>
<comment type="tissue specificity">
    <text evidence="2 3">Expressed in neuronal tissues of the head, including sheath cells of the cephalic sensilla (CEPsh) glia.</text>
</comment>
<comment type="developmental stage">
    <text evidence="2 3">Expressed in embryos and during larval development (PubMed:16014321). Expressed strongly in cephalic sheath (CEPsh) glia at all developmental stages and in some motoneurons of the ventral cord in larvae (PubMed:18508862).</text>
</comment>
<comment type="disruption phenotype">
    <text evidence="2 3">Expression in ventral CEPsh glia is normal in knockout, but significantly reduced on a vab-3(ns157) mutant background (PubMed:18508862). RNAi-mediated knockdown causes egg-laying defects (PubMed:16014321).</text>
</comment>
<sequence length="101" mass="11301">MEKIGIDTAFAEPGVRLSINLRERCRMHDLNEALDDLRAVIPYAHGGSVRKLSKIATLLLAKNHIIMQAKAIEELSILVSQLKRKSENLENLNKSLKPDAN</sequence>
<name>HLH17_CAEEL</name>
<evidence type="ECO:0000255" key="1">
    <source>
        <dbReference type="PROSITE-ProRule" id="PRU00981"/>
    </source>
</evidence>
<evidence type="ECO:0000269" key="2">
    <source>
    </source>
</evidence>
<evidence type="ECO:0000269" key="3">
    <source>
    </source>
</evidence>
<evidence type="ECO:0000269" key="4">
    <source>
    </source>
</evidence>
<evidence type="ECO:0000305" key="5"/>
<evidence type="ECO:0000312" key="6">
    <source>
        <dbReference type="Proteomes" id="UP000001940"/>
    </source>
</evidence>
<evidence type="ECO:0000312" key="7">
    <source>
        <dbReference type="WormBase" id="F38C2.2"/>
    </source>
</evidence>
<dbReference type="EMBL" id="BX284604">
    <property type="protein sequence ID" value="CAB05189.3"/>
    <property type="molecule type" value="Genomic_DNA"/>
</dbReference>
<dbReference type="RefSeq" id="NP_502928.3">
    <property type="nucleotide sequence ID" value="NM_070527.6"/>
</dbReference>
<dbReference type="SMR" id="O45489"/>
<dbReference type="FunCoup" id="O45489">
    <property type="interactions" value="202"/>
</dbReference>
<dbReference type="IntAct" id="O45489">
    <property type="interactions" value="1"/>
</dbReference>
<dbReference type="STRING" id="6239.F38C2.2.1"/>
<dbReference type="PaxDb" id="6239-F38C2.2"/>
<dbReference type="EnsemblMetazoa" id="F38C2.2.1">
    <property type="protein sequence ID" value="F38C2.2.1"/>
    <property type="gene ID" value="WBGene00001961"/>
</dbReference>
<dbReference type="GeneID" id="185460"/>
<dbReference type="KEGG" id="cel:CELE_F38C2.2"/>
<dbReference type="UCSC" id="F38C2.2">
    <property type="organism name" value="c. elegans"/>
</dbReference>
<dbReference type="AGR" id="WB:WBGene00001961"/>
<dbReference type="CTD" id="185460"/>
<dbReference type="WormBase" id="F38C2.2">
    <property type="protein sequence ID" value="CE42757"/>
    <property type="gene ID" value="WBGene00001961"/>
    <property type="gene designation" value="hlh-17"/>
</dbReference>
<dbReference type="eggNOG" id="KOG3898">
    <property type="taxonomic scope" value="Eukaryota"/>
</dbReference>
<dbReference type="GeneTree" id="ENSGT00940000168751"/>
<dbReference type="HOGENOM" id="CLU_169863_0_0_1"/>
<dbReference type="InParanoid" id="O45489"/>
<dbReference type="OrthoDB" id="10011855at2759"/>
<dbReference type="PhylomeDB" id="O45489"/>
<dbReference type="PRO" id="PR:O45489"/>
<dbReference type="Proteomes" id="UP000001940">
    <property type="component" value="Chromosome IV"/>
</dbReference>
<dbReference type="Bgee" id="WBGene00001961">
    <property type="expression patterns" value="Expressed in pharyngeal muscle cell (C elegans) and 3 other cell types or tissues"/>
</dbReference>
<dbReference type="GO" id="GO:0005634">
    <property type="term" value="C:nucleus"/>
    <property type="evidence" value="ECO:0000318"/>
    <property type="project" value="GO_Central"/>
</dbReference>
<dbReference type="GO" id="GO:0000981">
    <property type="term" value="F:DNA-binding transcription factor activity, RNA polymerase II-specific"/>
    <property type="evidence" value="ECO:0000318"/>
    <property type="project" value="GO_Central"/>
</dbReference>
<dbReference type="GO" id="GO:0070888">
    <property type="term" value="F:E-box binding"/>
    <property type="evidence" value="ECO:0000318"/>
    <property type="project" value="GO_Central"/>
</dbReference>
<dbReference type="GO" id="GO:0046983">
    <property type="term" value="F:protein dimerization activity"/>
    <property type="evidence" value="ECO:0007669"/>
    <property type="project" value="InterPro"/>
</dbReference>
<dbReference type="GO" id="GO:0061564">
    <property type="term" value="P:axon development"/>
    <property type="evidence" value="ECO:0000318"/>
    <property type="project" value="GO_Central"/>
</dbReference>
<dbReference type="GO" id="GO:0032226">
    <property type="term" value="P:positive regulation of synaptic transmission, dopaminergic"/>
    <property type="evidence" value="ECO:0000315"/>
    <property type="project" value="WormBase"/>
</dbReference>
<dbReference type="GO" id="GO:0045944">
    <property type="term" value="P:positive regulation of transcription by RNA polymerase II"/>
    <property type="evidence" value="ECO:0000315"/>
    <property type="project" value="WormBase"/>
</dbReference>
<dbReference type="GO" id="GO:0007423">
    <property type="term" value="P:sensory organ development"/>
    <property type="evidence" value="ECO:0000318"/>
    <property type="project" value="GO_Central"/>
</dbReference>
<dbReference type="CDD" id="cd11468">
    <property type="entry name" value="bHLH_TS_bHLHe22_like"/>
    <property type="match status" value="1"/>
</dbReference>
<dbReference type="FunFam" id="4.10.280.10:FF:000026">
    <property type="entry name" value="Basic helix-loop-helix family, member e23"/>
    <property type="match status" value="1"/>
</dbReference>
<dbReference type="Gene3D" id="4.10.280.10">
    <property type="entry name" value="Helix-loop-helix DNA-binding domain"/>
    <property type="match status" value="1"/>
</dbReference>
<dbReference type="InterPro" id="IPR011598">
    <property type="entry name" value="bHLH_dom"/>
</dbReference>
<dbReference type="InterPro" id="IPR050359">
    <property type="entry name" value="bHLH_transcription_factors"/>
</dbReference>
<dbReference type="InterPro" id="IPR036638">
    <property type="entry name" value="HLH_DNA-bd_sf"/>
</dbReference>
<dbReference type="PANTHER" id="PTHR19290">
    <property type="entry name" value="BASIC HELIX-LOOP-HELIX PROTEIN NEUROGENIN-RELATED"/>
    <property type="match status" value="1"/>
</dbReference>
<dbReference type="PANTHER" id="PTHR19290:SF104">
    <property type="entry name" value="GH17679P"/>
    <property type="match status" value="1"/>
</dbReference>
<dbReference type="Pfam" id="PF00010">
    <property type="entry name" value="HLH"/>
    <property type="match status" value="1"/>
</dbReference>
<dbReference type="SMART" id="SM00353">
    <property type="entry name" value="HLH"/>
    <property type="match status" value="1"/>
</dbReference>
<dbReference type="SUPFAM" id="SSF47459">
    <property type="entry name" value="HLH, helix-loop-helix DNA-binding domain"/>
    <property type="match status" value="1"/>
</dbReference>
<dbReference type="PROSITE" id="PS50888">
    <property type="entry name" value="BHLH"/>
    <property type="match status" value="1"/>
</dbReference>
<organism evidence="6">
    <name type="scientific">Caenorhabditis elegans</name>
    <dbReference type="NCBI Taxonomy" id="6239"/>
    <lineage>
        <taxon>Eukaryota</taxon>
        <taxon>Metazoa</taxon>
        <taxon>Ecdysozoa</taxon>
        <taxon>Nematoda</taxon>
        <taxon>Chromadorea</taxon>
        <taxon>Rhabditida</taxon>
        <taxon>Rhabditina</taxon>
        <taxon>Rhabditomorpha</taxon>
        <taxon>Rhabditoidea</taxon>
        <taxon>Rhabditidae</taxon>
        <taxon>Peloderinae</taxon>
        <taxon>Caenorhabditis</taxon>
    </lineage>
</organism>
<reference evidence="6" key="1">
    <citation type="journal article" date="1998" name="Science">
        <title>Genome sequence of the nematode C. elegans: a platform for investigating biology.</title>
        <authorList>
            <consortium name="The C. elegans sequencing consortium"/>
        </authorList>
    </citation>
    <scope>NUCLEOTIDE SEQUENCE [LARGE SCALE GENOMIC DNA]</scope>
    <source>
        <strain evidence="6">Bristol N2</strain>
    </source>
</reference>
<reference evidence="5" key="2">
    <citation type="journal article" date="2005" name="Gene">
        <title>Molecular characterization of HLH-17, a C. elegans bHLH protein required for normal larval development.</title>
        <authorList>
            <person name="McMiller T.L."/>
            <person name="Johnson C.M."/>
        </authorList>
    </citation>
    <scope>FUNCTION</scope>
    <scope>TISSUE SPECIFICITY</scope>
    <scope>DEVELOPMENTAL STAGE</scope>
    <scope>DISRUPTION PHENOTYPE</scope>
</reference>
<reference evidence="5" key="3">
    <citation type="journal article" date="2008" name="Development">
        <title>mls-2 and vab-3 Control glia development, hlh-17/Olig expression and glia-dependent neurite extension in C. elegans.</title>
        <authorList>
            <person name="Yoshimura S."/>
            <person name="Murray J.I."/>
            <person name="Lu Y."/>
            <person name="Waterston R.H."/>
            <person name="Shaham S."/>
        </authorList>
    </citation>
    <scope>FUNCTION</scope>
    <scope>TISSUE SPECIFICITY</scope>
    <scope>DEVELOPMENTAL STAGE</scope>
    <scope>DISRUPTION PHENOTYPE</scope>
</reference>
<reference evidence="5" key="4">
    <citation type="journal article" date="2011" name="J. Neurosci. Res.">
        <title>Modulation of dopamine-dependent behaviors by the Caenorhabditis elegans Olig homolog HLH-17.</title>
        <authorList>
            <person name="Felton C.M."/>
            <person name="Johnson C.M."/>
        </authorList>
    </citation>
    <scope>FUNCTION</scope>
</reference>